<protein>
    <recommendedName>
        <fullName>Probable cytosolic Fe-S cluster assembly factor GA29080</fullName>
    </recommendedName>
</protein>
<keyword id="KW-0004">4Fe-4S</keyword>
<keyword id="KW-0408">Iron</keyword>
<keyword id="KW-0411">Iron-sulfur</keyword>
<keyword id="KW-0479">Metal-binding</keyword>
<keyword id="KW-1185">Reference proteome</keyword>
<organism>
    <name type="scientific">Drosophila pseudoobscura pseudoobscura</name>
    <name type="common">Fruit fly</name>
    <dbReference type="NCBI Taxonomy" id="46245"/>
    <lineage>
        <taxon>Eukaryota</taxon>
        <taxon>Metazoa</taxon>
        <taxon>Ecdysozoa</taxon>
        <taxon>Arthropoda</taxon>
        <taxon>Hexapoda</taxon>
        <taxon>Insecta</taxon>
        <taxon>Pterygota</taxon>
        <taxon>Neoptera</taxon>
        <taxon>Endopterygota</taxon>
        <taxon>Diptera</taxon>
        <taxon>Brachycera</taxon>
        <taxon>Muscomorpha</taxon>
        <taxon>Ephydroidea</taxon>
        <taxon>Drosophilidae</taxon>
        <taxon>Drosophila</taxon>
        <taxon>Sophophora</taxon>
    </lineage>
</organism>
<name>NARF_DROPS</name>
<reference key="1">
    <citation type="journal article" date="2005" name="Genome Res.">
        <title>Comparative genome sequencing of Drosophila pseudoobscura: chromosomal, gene, and cis-element evolution.</title>
        <authorList>
            <person name="Richards S."/>
            <person name="Liu Y."/>
            <person name="Bettencourt B.R."/>
            <person name="Hradecky P."/>
            <person name="Letovsky S."/>
            <person name="Nielsen R."/>
            <person name="Thornton K."/>
            <person name="Hubisz M.J."/>
            <person name="Chen R."/>
            <person name="Meisel R.P."/>
            <person name="Couronne O."/>
            <person name="Hua S."/>
            <person name="Smith M.A."/>
            <person name="Zhang P."/>
            <person name="Liu J."/>
            <person name="Bussemaker H.J."/>
            <person name="van Batenburg M.F."/>
            <person name="Howells S.L."/>
            <person name="Scherer S.E."/>
            <person name="Sodergren E."/>
            <person name="Matthews B.B."/>
            <person name="Crosby M.A."/>
            <person name="Schroeder A.J."/>
            <person name="Ortiz-Barrientos D."/>
            <person name="Rives C.M."/>
            <person name="Metzker M.L."/>
            <person name="Muzny D.M."/>
            <person name="Scott G."/>
            <person name="Steffen D."/>
            <person name="Wheeler D.A."/>
            <person name="Worley K.C."/>
            <person name="Havlak P."/>
            <person name="Durbin K.J."/>
            <person name="Egan A."/>
            <person name="Gill R."/>
            <person name="Hume J."/>
            <person name="Morgan M.B."/>
            <person name="Miner G."/>
            <person name="Hamilton C."/>
            <person name="Huang Y."/>
            <person name="Waldron L."/>
            <person name="Verduzco D."/>
            <person name="Clerc-Blankenburg K.P."/>
            <person name="Dubchak I."/>
            <person name="Noor M.A.F."/>
            <person name="Anderson W."/>
            <person name="White K.P."/>
            <person name="Clark A.G."/>
            <person name="Schaeffer S.W."/>
            <person name="Gelbart W.M."/>
            <person name="Weinstock G.M."/>
            <person name="Gibbs R.A."/>
        </authorList>
    </citation>
    <scope>NUCLEOTIDE SEQUENCE [LARGE SCALE GENOMIC DNA]</scope>
    <source>
        <strain>MV2-25 / Tucson 14011-0121.94</strain>
    </source>
</reference>
<proteinExistence type="inferred from homology"/>
<gene>
    <name type="ORF">GA29080</name>
</gene>
<sequence length="477" mass="54068">MSRFSGALQLTDLDDFITPSQECIKPVTVDKTATSKTGAKITVQEDGYYEESESGKQKLQKVEITLQDCLACSGCITSAESVLITQQSEEELLKVLRENAKVKATGDMEQVRTIVFTIATQPLLSLAHRYQLSAEETARHLAGYFRSLGVDYVLCTKVADDLALLECQQEFVERYRDNEELTMLSSSCPGWVCYAEKTHGNFILPYIATTRSPQQIMGVLVKQFLAEKLNIPGSRIYHVTVMPCYDKKLEASRMDFYSEVNESRDVDCVITSVEVEQMLNEDERSLSEHEASDLDWPWSEQRPESMVWSHEATLSGGYAEHIFKFAAKELFNEAPPTELSFKQLRNRDFREISLEKDDKTVLKFAIANGFRNIQNLVQKLKRGKGASYHFVEVMACPSGCINGGAQVRPTTGQHVRELTQQLEELYKKLPRSQPDNAHTKLIYRDFLDGSHTDKSNELLHTSYHAVEKLSTALNIKW</sequence>
<dbReference type="EMBL" id="CH379061">
    <property type="protein sequence ID" value="EDY70657.1"/>
    <property type="molecule type" value="Genomic_DNA"/>
</dbReference>
<dbReference type="RefSeq" id="XP_002133255.1">
    <property type="nucleotide sequence ID" value="XM_002133219.2"/>
</dbReference>
<dbReference type="SMR" id="B5DK31"/>
<dbReference type="FunCoup" id="B5DK31">
    <property type="interactions" value="508"/>
</dbReference>
<dbReference type="STRING" id="46245.B5DK31"/>
<dbReference type="EnsemblMetazoa" id="FBtr0289580">
    <property type="protein sequence ID" value="FBpp0288018"/>
    <property type="gene ID" value="FBgn0265246"/>
</dbReference>
<dbReference type="KEGG" id="dpo:6902741"/>
<dbReference type="eggNOG" id="KOG2439">
    <property type="taxonomic scope" value="Eukaryota"/>
</dbReference>
<dbReference type="HOGENOM" id="CLU_018240_0_0_1"/>
<dbReference type="InParanoid" id="B5DK31"/>
<dbReference type="OMA" id="GYLHHVL"/>
<dbReference type="Proteomes" id="UP000001819">
    <property type="component" value="Chromosome 4"/>
</dbReference>
<dbReference type="Bgee" id="FBgn0265246">
    <property type="expression patterns" value="Expressed in insect adult head and 2 other cell types or tissues"/>
</dbReference>
<dbReference type="ExpressionAtlas" id="B5DK31">
    <property type="expression patterns" value="baseline"/>
</dbReference>
<dbReference type="GO" id="GO:0051539">
    <property type="term" value="F:4 iron, 4 sulfur cluster binding"/>
    <property type="evidence" value="ECO:0007669"/>
    <property type="project" value="UniProtKB-KW"/>
</dbReference>
<dbReference type="GO" id="GO:0046872">
    <property type="term" value="F:metal ion binding"/>
    <property type="evidence" value="ECO:0007669"/>
    <property type="project" value="UniProtKB-KW"/>
</dbReference>
<dbReference type="GO" id="GO:0016226">
    <property type="term" value="P:iron-sulfur cluster assembly"/>
    <property type="evidence" value="ECO:0000250"/>
    <property type="project" value="UniProtKB"/>
</dbReference>
<dbReference type="FunFam" id="3.30.70.20:FF:000042">
    <property type="entry name" value="Cytosolic Fe-S cluster assembly factor NAR1"/>
    <property type="match status" value="1"/>
</dbReference>
<dbReference type="Gene3D" id="3.40.50.1780">
    <property type="match status" value="1"/>
</dbReference>
<dbReference type="Gene3D" id="3.40.950.10">
    <property type="entry name" value="Fe-only Hydrogenase (Larger Subunit), Chain L, domain 3"/>
    <property type="match status" value="1"/>
</dbReference>
<dbReference type="InterPro" id="IPR050340">
    <property type="entry name" value="Cytosolic_Fe-S_CAF"/>
</dbReference>
<dbReference type="InterPro" id="IPR009016">
    <property type="entry name" value="Fe_hydrogenase"/>
</dbReference>
<dbReference type="InterPro" id="IPR004108">
    <property type="entry name" value="Fe_hydrogenase_lsu_C"/>
</dbReference>
<dbReference type="InterPro" id="IPR003149">
    <property type="entry name" value="Fe_hydrogenase_ssu"/>
</dbReference>
<dbReference type="PANTHER" id="PTHR11615">
    <property type="entry name" value="NITRATE, FORMATE, IRON DEHYDROGENASE"/>
    <property type="match status" value="1"/>
</dbReference>
<dbReference type="Pfam" id="PF02906">
    <property type="entry name" value="Fe_hyd_lg_C"/>
    <property type="match status" value="1"/>
</dbReference>
<dbReference type="Pfam" id="PF02256">
    <property type="entry name" value="Fe_hyd_SSU"/>
    <property type="match status" value="1"/>
</dbReference>
<dbReference type="SMART" id="SM00902">
    <property type="entry name" value="Fe_hyd_SSU"/>
    <property type="match status" value="1"/>
</dbReference>
<dbReference type="SUPFAM" id="SSF53920">
    <property type="entry name" value="Fe-only hydrogenase"/>
    <property type="match status" value="1"/>
</dbReference>
<accession>B5DK31</accession>
<comment type="function">
    <text evidence="1">Component of the cytosolic iron-sulfur (Fe/S) protein assembly machinery. Required for maturation of extramitochondrial Fe/S proteins (By similarity).</text>
</comment>
<comment type="similarity">
    <text evidence="3">Belongs to the NARF family.</text>
</comment>
<evidence type="ECO:0000250" key="1"/>
<evidence type="ECO:0000255" key="2"/>
<evidence type="ECO:0000305" key="3"/>
<feature type="chain" id="PRO_0000383705" description="Probable cytosolic Fe-S cluster assembly factor GA29080">
    <location>
        <begin position="1"/>
        <end position="477"/>
    </location>
</feature>
<feature type="binding site" evidence="2">
    <location>
        <position position="23"/>
    </location>
    <ligand>
        <name>[4Fe-4S] cluster</name>
        <dbReference type="ChEBI" id="CHEBI:49883"/>
        <label>1</label>
    </ligand>
</feature>
<feature type="binding site" evidence="2">
    <location>
        <position position="69"/>
    </location>
    <ligand>
        <name>[4Fe-4S] cluster</name>
        <dbReference type="ChEBI" id="CHEBI:49883"/>
        <label>1</label>
    </ligand>
</feature>
<feature type="binding site" evidence="2">
    <location>
        <position position="72"/>
    </location>
    <ligand>
        <name>[4Fe-4S] cluster</name>
        <dbReference type="ChEBI" id="CHEBI:49883"/>
        <label>1</label>
    </ligand>
</feature>
<feature type="binding site" evidence="2">
    <location>
        <position position="75"/>
    </location>
    <ligand>
        <name>[4Fe-4S] cluster</name>
        <dbReference type="ChEBI" id="CHEBI:49883"/>
        <label>1</label>
    </ligand>
</feature>
<feature type="binding site" evidence="2">
    <location>
        <position position="188"/>
    </location>
    <ligand>
        <name>[4Fe-4S] cluster</name>
        <dbReference type="ChEBI" id="CHEBI:49883"/>
        <label>2</label>
    </ligand>
</feature>
<feature type="binding site" evidence="2">
    <location>
        <position position="244"/>
    </location>
    <ligand>
        <name>[4Fe-4S] cluster</name>
        <dbReference type="ChEBI" id="CHEBI:49883"/>
        <label>2</label>
    </ligand>
</feature>
<feature type="binding site" evidence="2">
    <location>
        <position position="396"/>
    </location>
    <ligand>
        <name>[4Fe-4S] cluster</name>
        <dbReference type="ChEBI" id="CHEBI:49883"/>
        <label>2</label>
    </ligand>
</feature>
<feature type="binding site" evidence="2">
    <location>
        <position position="400"/>
    </location>
    <ligand>
        <name>[4Fe-4S] cluster</name>
        <dbReference type="ChEBI" id="CHEBI:49883"/>
        <label>2</label>
    </ligand>
</feature>